<evidence type="ECO:0000255" key="1">
    <source>
        <dbReference type="HAMAP-Rule" id="MF_01345"/>
    </source>
</evidence>
<evidence type="ECO:0000305" key="2"/>
<comment type="function">
    <text evidence="1">One of the primary rRNA binding proteins, it binds specifically to the 5'-end of 16S ribosomal RNA.</text>
</comment>
<comment type="subunit">
    <text evidence="1">Part of the 30S ribosomal subunit.</text>
</comment>
<comment type="similarity">
    <text evidence="1">Belongs to the universal ribosomal protein uS17 family.</text>
</comment>
<dbReference type="EMBL" id="CP000026">
    <property type="protein sequence ID" value="AAV79113.1"/>
    <property type="molecule type" value="Genomic_DNA"/>
</dbReference>
<dbReference type="RefSeq" id="WP_000130101.1">
    <property type="nucleotide sequence ID" value="NC_006511.1"/>
</dbReference>
<dbReference type="SMR" id="Q5PIU2"/>
<dbReference type="GeneID" id="66757766"/>
<dbReference type="KEGG" id="spt:SPA3297"/>
<dbReference type="HOGENOM" id="CLU_073626_1_1_6"/>
<dbReference type="Proteomes" id="UP000008185">
    <property type="component" value="Chromosome"/>
</dbReference>
<dbReference type="GO" id="GO:0022627">
    <property type="term" value="C:cytosolic small ribosomal subunit"/>
    <property type="evidence" value="ECO:0007669"/>
    <property type="project" value="TreeGrafter"/>
</dbReference>
<dbReference type="GO" id="GO:0019843">
    <property type="term" value="F:rRNA binding"/>
    <property type="evidence" value="ECO:0007669"/>
    <property type="project" value="UniProtKB-UniRule"/>
</dbReference>
<dbReference type="GO" id="GO:0003735">
    <property type="term" value="F:structural constituent of ribosome"/>
    <property type="evidence" value="ECO:0007669"/>
    <property type="project" value="InterPro"/>
</dbReference>
<dbReference type="GO" id="GO:0006412">
    <property type="term" value="P:translation"/>
    <property type="evidence" value="ECO:0007669"/>
    <property type="project" value="UniProtKB-UniRule"/>
</dbReference>
<dbReference type="CDD" id="cd00364">
    <property type="entry name" value="Ribosomal_uS17"/>
    <property type="match status" value="1"/>
</dbReference>
<dbReference type="FunFam" id="2.40.50.140:FF:000014">
    <property type="entry name" value="30S ribosomal protein S17"/>
    <property type="match status" value="1"/>
</dbReference>
<dbReference type="Gene3D" id="2.40.50.140">
    <property type="entry name" value="Nucleic acid-binding proteins"/>
    <property type="match status" value="1"/>
</dbReference>
<dbReference type="HAMAP" id="MF_01345_B">
    <property type="entry name" value="Ribosomal_uS17_B"/>
    <property type="match status" value="1"/>
</dbReference>
<dbReference type="InterPro" id="IPR012340">
    <property type="entry name" value="NA-bd_OB-fold"/>
</dbReference>
<dbReference type="InterPro" id="IPR000266">
    <property type="entry name" value="Ribosomal_uS17"/>
</dbReference>
<dbReference type="InterPro" id="IPR019984">
    <property type="entry name" value="Ribosomal_uS17_bact/chlr"/>
</dbReference>
<dbReference type="InterPro" id="IPR019979">
    <property type="entry name" value="Ribosomal_uS17_CS"/>
</dbReference>
<dbReference type="NCBIfam" id="NF004123">
    <property type="entry name" value="PRK05610.1"/>
    <property type="match status" value="1"/>
</dbReference>
<dbReference type="NCBIfam" id="TIGR03635">
    <property type="entry name" value="uS17_bact"/>
    <property type="match status" value="1"/>
</dbReference>
<dbReference type="PANTHER" id="PTHR10744">
    <property type="entry name" value="40S RIBOSOMAL PROTEIN S11 FAMILY MEMBER"/>
    <property type="match status" value="1"/>
</dbReference>
<dbReference type="PANTHER" id="PTHR10744:SF1">
    <property type="entry name" value="SMALL RIBOSOMAL SUBUNIT PROTEIN US17M"/>
    <property type="match status" value="1"/>
</dbReference>
<dbReference type="Pfam" id="PF00366">
    <property type="entry name" value="Ribosomal_S17"/>
    <property type="match status" value="1"/>
</dbReference>
<dbReference type="PRINTS" id="PR00973">
    <property type="entry name" value="RIBOSOMALS17"/>
</dbReference>
<dbReference type="SUPFAM" id="SSF50249">
    <property type="entry name" value="Nucleic acid-binding proteins"/>
    <property type="match status" value="1"/>
</dbReference>
<dbReference type="PROSITE" id="PS00056">
    <property type="entry name" value="RIBOSOMAL_S17"/>
    <property type="match status" value="1"/>
</dbReference>
<keyword id="KW-0687">Ribonucleoprotein</keyword>
<keyword id="KW-0689">Ribosomal protein</keyword>
<keyword id="KW-0694">RNA-binding</keyword>
<keyword id="KW-0699">rRNA-binding</keyword>
<name>RS17_SALPA</name>
<feature type="chain" id="PRO_0000233561" description="Small ribosomal subunit protein uS17">
    <location>
        <begin position="1"/>
        <end position="84"/>
    </location>
</feature>
<gene>
    <name evidence="1" type="primary">rpsQ</name>
    <name type="ordered locus">SPA3297</name>
</gene>
<organism>
    <name type="scientific">Salmonella paratyphi A (strain ATCC 9150 / SARB42)</name>
    <dbReference type="NCBI Taxonomy" id="295319"/>
    <lineage>
        <taxon>Bacteria</taxon>
        <taxon>Pseudomonadati</taxon>
        <taxon>Pseudomonadota</taxon>
        <taxon>Gammaproteobacteria</taxon>
        <taxon>Enterobacterales</taxon>
        <taxon>Enterobacteriaceae</taxon>
        <taxon>Salmonella</taxon>
    </lineage>
</organism>
<proteinExistence type="inferred from homology"/>
<sequence>MTDKIRTLQGRVVSDKMEKSIVVAIERFVKHPIYGKFIKRTTKMHVHDENNECGIGDVVEIRECRPLSKTKSWTLVRVVEKAVL</sequence>
<accession>Q5PIU2</accession>
<protein>
    <recommendedName>
        <fullName evidence="1">Small ribosomal subunit protein uS17</fullName>
    </recommendedName>
    <alternativeName>
        <fullName evidence="2">30S ribosomal protein S17</fullName>
    </alternativeName>
</protein>
<reference key="1">
    <citation type="journal article" date="2004" name="Nat. Genet.">
        <title>Comparison of genome degradation in Paratyphi A and Typhi, human-restricted serovars of Salmonella enterica that cause typhoid.</title>
        <authorList>
            <person name="McClelland M."/>
            <person name="Sanderson K.E."/>
            <person name="Clifton S.W."/>
            <person name="Latreille P."/>
            <person name="Porwollik S."/>
            <person name="Sabo A."/>
            <person name="Meyer R."/>
            <person name="Bieri T."/>
            <person name="Ozersky P."/>
            <person name="McLellan M."/>
            <person name="Harkins C.R."/>
            <person name="Wang C."/>
            <person name="Nguyen C."/>
            <person name="Berghoff A."/>
            <person name="Elliott G."/>
            <person name="Kohlberg S."/>
            <person name="Strong C."/>
            <person name="Du F."/>
            <person name="Carter J."/>
            <person name="Kremizki C."/>
            <person name="Layman D."/>
            <person name="Leonard S."/>
            <person name="Sun H."/>
            <person name="Fulton L."/>
            <person name="Nash W."/>
            <person name="Miner T."/>
            <person name="Minx P."/>
            <person name="Delehaunty K."/>
            <person name="Fronick C."/>
            <person name="Magrini V."/>
            <person name="Nhan M."/>
            <person name="Warren W."/>
            <person name="Florea L."/>
            <person name="Spieth J."/>
            <person name="Wilson R.K."/>
        </authorList>
    </citation>
    <scope>NUCLEOTIDE SEQUENCE [LARGE SCALE GENOMIC DNA]</scope>
    <source>
        <strain>ATCC 9150 / SARB42</strain>
    </source>
</reference>